<gene>
    <name evidence="1" type="primary">rbcL</name>
</gene>
<sequence length="480" mass="53132">MSPQTETKASVGFKAGVKEYKLTYYTPEYEVKDTDILAAFRVTPQPGVPPEEAGAAVAAESSTGTWTTVWTDGLTSLDRYKGRCYDIEPVPGEEDQYICYVAYPLDLFEEGSVTNMFTSIVGNVFGFKALRALRLEDLRVPTAYIKTFQGPPHGIQVERDKLNKYGRPLLGCTIKPKLGLSAKNYGRAVYECLRGGLDFTKDDENVNSQPFMRWRDRFLFCAEAIFKSQAETGEIKGHYLNATAGTCEEMIKRAMCARELGVPIVMHDYLTGGFTANTSLAHYCRDNGLLLHIHRAMHAVIDRQKNHGMHFRVLAKALRMSGGDHIHAGTVVGKLEGERDITLGFVDLLRDDVIEKDRSRGIYFTQDWVSMPGVLPVASGGIHVWHMPALTEIFGDDSVLQFGGGTLGHPWGNAPGAVANRVALEACVQARNEGRDLAREGNEIIREASKWSPELAAACEVWKAIKFEFDAVDKLDKPAS</sequence>
<dbReference type="EC" id="4.1.1.39" evidence="1"/>
<dbReference type="EMBL" id="AP009123">
    <property type="protein sequence ID" value="BAF41255.1"/>
    <property type="molecule type" value="Genomic_DNA"/>
</dbReference>
<dbReference type="RefSeq" id="YP_913195.1">
    <property type="nucleotide sequence ID" value="NC_008641.1"/>
</dbReference>
<dbReference type="SMR" id="A0ZZ43"/>
<dbReference type="GeneID" id="4575231"/>
<dbReference type="GO" id="GO:0009507">
    <property type="term" value="C:chloroplast"/>
    <property type="evidence" value="ECO:0007669"/>
    <property type="project" value="UniProtKB-SubCell"/>
</dbReference>
<dbReference type="GO" id="GO:0000287">
    <property type="term" value="F:magnesium ion binding"/>
    <property type="evidence" value="ECO:0007669"/>
    <property type="project" value="UniProtKB-UniRule"/>
</dbReference>
<dbReference type="GO" id="GO:0004497">
    <property type="term" value="F:monooxygenase activity"/>
    <property type="evidence" value="ECO:0007669"/>
    <property type="project" value="UniProtKB-KW"/>
</dbReference>
<dbReference type="GO" id="GO:0016984">
    <property type="term" value="F:ribulose-bisphosphate carboxylase activity"/>
    <property type="evidence" value="ECO:0007669"/>
    <property type="project" value="UniProtKB-UniRule"/>
</dbReference>
<dbReference type="GO" id="GO:0009853">
    <property type="term" value="P:photorespiration"/>
    <property type="evidence" value="ECO:0007669"/>
    <property type="project" value="UniProtKB-KW"/>
</dbReference>
<dbReference type="GO" id="GO:0019253">
    <property type="term" value="P:reductive pentose-phosphate cycle"/>
    <property type="evidence" value="ECO:0007669"/>
    <property type="project" value="UniProtKB-UniRule"/>
</dbReference>
<dbReference type="CDD" id="cd08212">
    <property type="entry name" value="RuBisCO_large_I"/>
    <property type="match status" value="1"/>
</dbReference>
<dbReference type="FunFam" id="3.20.20.110:FF:000001">
    <property type="entry name" value="Ribulose bisphosphate carboxylase large chain"/>
    <property type="match status" value="1"/>
</dbReference>
<dbReference type="FunFam" id="3.30.70.150:FF:000001">
    <property type="entry name" value="Ribulose bisphosphate carboxylase large chain"/>
    <property type="match status" value="1"/>
</dbReference>
<dbReference type="Gene3D" id="3.20.20.110">
    <property type="entry name" value="Ribulose bisphosphate carboxylase, large subunit, C-terminal domain"/>
    <property type="match status" value="1"/>
</dbReference>
<dbReference type="Gene3D" id="3.30.70.150">
    <property type="entry name" value="RuBisCO large subunit, N-terminal domain"/>
    <property type="match status" value="1"/>
</dbReference>
<dbReference type="HAMAP" id="MF_01338">
    <property type="entry name" value="RuBisCO_L_type1"/>
    <property type="match status" value="1"/>
</dbReference>
<dbReference type="InterPro" id="IPR033966">
    <property type="entry name" value="RuBisCO"/>
</dbReference>
<dbReference type="InterPro" id="IPR020878">
    <property type="entry name" value="RuBisCo_large_chain_AS"/>
</dbReference>
<dbReference type="InterPro" id="IPR000685">
    <property type="entry name" value="RuBisCO_lsu_C"/>
</dbReference>
<dbReference type="InterPro" id="IPR036376">
    <property type="entry name" value="RuBisCO_lsu_C_sf"/>
</dbReference>
<dbReference type="InterPro" id="IPR017443">
    <property type="entry name" value="RuBisCO_lsu_fd_N"/>
</dbReference>
<dbReference type="InterPro" id="IPR036422">
    <property type="entry name" value="RuBisCO_lsu_N_sf"/>
</dbReference>
<dbReference type="InterPro" id="IPR020888">
    <property type="entry name" value="RuBisCO_lsuI"/>
</dbReference>
<dbReference type="NCBIfam" id="NF003252">
    <property type="entry name" value="PRK04208.1"/>
    <property type="match status" value="1"/>
</dbReference>
<dbReference type="PANTHER" id="PTHR42704">
    <property type="entry name" value="RIBULOSE BISPHOSPHATE CARBOXYLASE"/>
    <property type="match status" value="1"/>
</dbReference>
<dbReference type="PANTHER" id="PTHR42704:SF16">
    <property type="entry name" value="RIBULOSE BISPHOSPHATE CARBOXYLASE LARGE CHAIN"/>
    <property type="match status" value="1"/>
</dbReference>
<dbReference type="Pfam" id="PF00016">
    <property type="entry name" value="RuBisCO_large"/>
    <property type="match status" value="1"/>
</dbReference>
<dbReference type="Pfam" id="PF02788">
    <property type="entry name" value="RuBisCO_large_N"/>
    <property type="match status" value="1"/>
</dbReference>
<dbReference type="SFLD" id="SFLDG01052">
    <property type="entry name" value="RuBisCO"/>
    <property type="match status" value="1"/>
</dbReference>
<dbReference type="SFLD" id="SFLDS00014">
    <property type="entry name" value="RuBisCO"/>
    <property type="match status" value="1"/>
</dbReference>
<dbReference type="SFLD" id="SFLDG00301">
    <property type="entry name" value="RuBisCO-like_proteins"/>
    <property type="match status" value="1"/>
</dbReference>
<dbReference type="SUPFAM" id="SSF51649">
    <property type="entry name" value="RuBisCo, C-terminal domain"/>
    <property type="match status" value="1"/>
</dbReference>
<dbReference type="SUPFAM" id="SSF54966">
    <property type="entry name" value="RuBisCO, large subunit, small (N-terminal) domain"/>
    <property type="match status" value="1"/>
</dbReference>
<dbReference type="PROSITE" id="PS00157">
    <property type="entry name" value="RUBISCO_LARGE"/>
    <property type="match status" value="1"/>
</dbReference>
<keyword id="KW-0007">Acetylation</keyword>
<keyword id="KW-0113">Calvin cycle</keyword>
<keyword id="KW-0120">Carbon dioxide fixation</keyword>
<keyword id="KW-0150">Chloroplast</keyword>
<keyword id="KW-1015">Disulfide bond</keyword>
<keyword id="KW-0456">Lyase</keyword>
<keyword id="KW-0460">Magnesium</keyword>
<keyword id="KW-0479">Metal-binding</keyword>
<keyword id="KW-0488">Methylation</keyword>
<keyword id="KW-0503">Monooxygenase</keyword>
<keyword id="KW-0560">Oxidoreductase</keyword>
<keyword id="KW-0601">Photorespiration</keyword>
<keyword id="KW-0602">Photosynthesis</keyword>
<keyword id="KW-0934">Plastid</keyword>
<protein>
    <recommendedName>
        <fullName evidence="1">Ribulose bisphosphate carboxylase large chain</fullName>
        <shortName evidence="1">RuBisCO large subunit</shortName>
        <ecNumber evidence="1">4.1.1.39</ecNumber>
    </recommendedName>
</protein>
<feature type="propeptide" id="PRO_0000275361" evidence="1">
    <location>
        <begin position="1"/>
        <end position="2"/>
    </location>
</feature>
<feature type="chain" id="PRO_0000275362" description="Ribulose bisphosphate carboxylase large chain">
    <location>
        <begin position="3"/>
        <end position="480"/>
    </location>
</feature>
<feature type="active site" description="Proton acceptor" evidence="1">
    <location>
        <position position="175"/>
    </location>
</feature>
<feature type="active site" description="Proton acceptor" evidence="1">
    <location>
        <position position="294"/>
    </location>
</feature>
<feature type="binding site" description="in homodimeric partner" evidence="1">
    <location>
        <position position="123"/>
    </location>
    <ligand>
        <name>substrate</name>
    </ligand>
</feature>
<feature type="binding site" evidence="1">
    <location>
        <position position="173"/>
    </location>
    <ligand>
        <name>substrate</name>
    </ligand>
</feature>
<feature type="binding site" evidence="1">
    <location>
        <position position="177"/>
    </location>
    <ligand>
        <name>substrate</name>
    </ligand>
</feature>
<feature type="binding site" description="via carbamate group" evidence="1">
    <location>
        <position position="201"/>
    </location>
    <ligand>
        <name>Mg(2+)</name>
        <dbReference type="ChEBI" id="CHEBI:18420"/>
    </ligand>
</feature>
<feature type="binding site" evidence="1">
    <location>
        <position position="203"/>
    </location>
    <ligand>
        <name>Mg(2+)</name>
        <dbReference type="ChEBI" id="CHEBI:18420"/>
    </ligand>
</feature>
<feature type="binding site" evidence="1">
    <location>
        <position position="204"/>
    </location>
    <ligand>
        <name>Mg(2+)</name>
        <dbReference type="ChEBI" id="CHEBI:18420"/>
    </ligand>
</feature>
<feature type="binding site" evidence="1">
    <location>
        <position position="295"/>
    </location>
    <ligand>
        <name>substrate</name>
    </ligand>
</feature>
<feature type="binding site" evidence="1">
    <location>
        <position position="327"/>
    </location>
    <ligand>
        <name>substrate</name>
    </ligand>
</feature>
<feature type="binding site" evidence="1">
    <location>
        <position position="379"/>
    </location>
    <ligand>
        <name>substrate</name>
    </ligand>
</feature>
<feature type="site" description="Transition state stabilizer" evidence="1">
    <location>
        <position position="334"/>
    </location>
</feature>
<feature type="modified residue" description="N-acetylproline" evidence="1">
    <location>
        <position position="3"/>
    </location>
</feature>
<feature type="modified residue" description="N6,N6,N6-trimethyllysine" evidence="1">
    <location>
        <position position="14"/>
    </location>
</feature>
<feature type="modified residue" description="N6-carboxylysine" evidence="1">
    <location>
        <position position="201"/>
    </location>
</feature>
<feature type="disulfide bond" description="Interchain; in linked form" evidence="1">
    <location>
        <position position="247"/>
    </location>
</feature>
<reference key="1">
    <citation type="journal article" date="2006" name="Genes Genet. Syst.">
        <title>Complete nucleotide sequence of the cotton (Gossypium barbadense L.) chloroplast genome with a comparative analysis of sequences among 9 dicot plants.</title>
        <authorList>
            <person name="Ibrahim R.I.H."/>
            <person name="Azuma J."/>
            <person name="Sakamoto M."/>
        </authorList>
    </citation>
    <scope>NUCLEOTIDE SEQUENCE [LARGE SCALE GENOMIC DNA]</scope>
</reference>
<proteinExistence type="inferred from homology"/>
<accession>A0ZZ43</accession>
<name>RBL_GOSBA</name>
<geneLocation type="chloroplast"/>
<organism>
    <name type="scientific">Gossypium barbadense</name>
    <name type="common">Sea Island cotton</name>
    <name type="synonym">Hibiscus barbadensis</name>
    <dbReference type="NCBI Taxonomy" id="3634"/>
    <lineage>
        <taxon>Eukaryota</taxon>
        <taxon>Viridiplantae</taxon>
        <taxon>Streptophyta</taxon>
        <taxon>Embryophyta</taxon>
        <taxon>Tracheophyta</taxon>
        <taxon>Spermatophyta</taxon>
        <taxon>Magnoliopsida</taxon>
        <taxon>eudicotyledons</taxon>
        <taxon>Gunneridae</taxon>
        <taxon>Pentapetalae</taxon>
        <taxon>rosids</taxon>
        <taxon>malvids</taxon>
        <taxon>Malvales</taxon>
        <taxon>Malvaceae</taxon>
        <taxon>Malvoideae</taxon>
        <taxon>Gossypium</taxon>
    </lineage>
</organism>
<evidence type="ECO:0000255" key="1">
    <source>
        <dbReference type="HAMAP-Rule" id="MF_01338"/>
    </source>
</evidence>
<comment type="function">
    <text evidence="1">RuBisCO catalyzes two reactions: the carboxylation of D-ribulose 1,5-bisphosphate, the primary event in carbon dioxide fixation, as well as the oxidative fragmentation of the pentose substrate in the photorespiration process. Both reactions occur simultaneously and in competition at the same active site.</text>
</comment>
<comment type="catalytic activity">
    <reaction evidence="1">
        <text>2 (2R)-3-phosphoglycerate + 2 H(+) = D-ribulose 1,5-bisphosphate + CO2 + H2O</text>
        <dbReference type="Rhea" id="RHEA:23124"/>
        <dbReference type="ChEBI" id="CHEBI:15377"/>
        <dbReference type="ChEBI" id="CHEBI:15378"/>
        <dbReference type="ChEBI" id="CHEBI:16526"/>
        <dbReference type="ChEBI" id="CHEBI:57870"/>
        <dbReference type="ChEBI" id="CHEBI:58272"/>
        <dbReference type="EC" id="4.1.1.39"/>
    </reaction>
</comment>
<comment type="catalytic activity">
    <reaction evidence="1">
        <text>D-ribulose 1,5-bisphosphate + O2 = 2-phosphoglycolate + (2R)-3-phosphoglycerate + 2 H(+)</text>
        <dbReference type="Rhea" id="RHEA:36631"/>
        <dbReference type="ChEBI" id="CHEBI:15378"/>
        <dbReference type="ChEBI" id="CHEBI:15379"/>
        <dbReference type="ChEBI" id="CHEBI:57870"/>
        <dbReference type="ChEBI" id="CHEBI:58033"/>
        <dbReference type="ChEBI" id="CHEBI:58272"/>
    </reaction>
</comment>
<comment type="cofactor">
    <cofactor evidence="1">
        <name>Mg(2+)</name>
        <dbReference type="ChEBI" id="CHEBI:18420"/>
    </cofactor>
    <text evidence="1">Binds 1 Mg(2+) ion per subunit.</text>
</comment>
<comment type="subunit">
    <text evidence="1">Heterohexadecamer of 8 large chains and 8 small chains; disulfide-linked. The disulfide link is formed within the large subunit homodimers.</text>
</comment>
<comment type="subcellular location">
    <subcellularLocation>
        <location>Plastid</location>
        <location>Chloroplast</location>
    </subcellularLocation>
</comment>
<comment type="PTM">
    <text evidence="1">The disulfide bond which can form in the large chain dimeric partners within the hexadecamer appears to be associated with oxidative stress and protein turnover.</text>
</comment>
<comment type="miscellaneous">
    <text evidence="1">The basic functional RuBisCO is composed of a large chain homodimer in a 'head-to-tail' conformation. In form I RuBisCO this homodimer is arranged in a barrel-like tetramer with the small subunits forming a tetrameric 'cap' on each end of the 'barrel'.</text>
</comment>
<comment type="similarity">
    <text evidence="1">Belongs to the RuBisCO large chain family. Type I subfamily.</text>
</comment>